<feature type="chain" id="PRO_1000062293" description="ATP synthase gamma chain">
    <location>
        <begin position="1"/>
        <end position="316"/>
    </location>
</feature>
<evidence type="ECO:0000255" key="1">
    <source>
        <dbReference type="HAMAP-Rule" id="MF_00815"/>
    </source>
</evidence>
<comment type="function">
    <text evidence="1">Produces ATP from ADP in the presence of a proton gradient across the membrane. The gamma chain is believed to be important in regulating ATPase activity and the flow of protons through the CF(0) complex.</text>
</comment>
<comment type="subunit">
    <text evidence="1">F-type ATPases have 2 components, CF(1) - the catalytic core - and CF(0) - the membrane proton channel. CF(1) has five subunits: alpha(3), beta(3), gamma(1), delta(1), epsilon(1). CF(0) has three main subunits: a, b and c.</text>
</comment>
<comment type="subcellular location">
    <subcellularLocation>
        <location evidence="1">Cellular thylakoid membrane</location>
        <topology evidence="1">Peripheral membrane protein</topology>
    </subcellularLocation>
</comment>
<comment type="similarity">
    <text evidence="1">Belongs to the ATPase gamma chain family.</text>
</comment>
<gene>
    <name evidence="1" type="primary">atpG</name>
    <name evidence="1" type="synonym">atpC</name>
    <name type="ordered locus">P9215_17181</name>
</gene>
<protein>
    <recommendedName>
        <fullName evidence="1">ATP synthase gamma chain</fullName>
    </recommendedName>
    <alternativeName>
        <fullName evidence="1">ATP synthase F1 sector gamma subunit</fullName>
    </alternativeName>
    <alternativeName>
        <fullName evidence="1">F-ATPase gamma subunit</fullName>
    </alternativeName>
</protein>
<dbReference type="EMBL" id="CP000825">
    <property type="protein sequence ID" value="ABV51331.1"/>
    <property type="molecule type" value="Genomic_DNA"/>
</dbReference>
<dbReference type="RefSeq" id="WP_012008353.1">
    <property type="nucleotide sequence ID" value="NC_009840.1"/>
</dbReference>
<dbReference type="SMR" id="A8G6V0"/>
<dbReference type="STRING" id="93060.P9215_17181"/>
<dbReference type="KEGG" id="pmh:P9215_17181"/>
<dbReference type="eggNOG" id="COG0224">
    <property type="taxonomic scope" value="Bacteria"/>
</dbReference>
<dbReference type="HOGENOM" id="CLU_050669_0_0_3"/>
<dbReference type="OrthoDB" id="9812769at2"/>
<dbReference type="Proteomes" id="UP000002014">
    <property type="component" value="Chromosome"/>
</dbReference>
<dbReference type="GO" id="GO:0031676">
    <property type="term" value="C:plasma membrane-derived thylakoid membrane"/>
    <property type="evidence" value="ECO:0007669"/>
    <property type="project" value="UniProtKB-SubCell"/>
</dbReference>
<dbReference type="GO" id="GO:0045259">
    <property type="term" value="C:proton-transporting ATP synthase complex"/>
    <property type="evidence" value="ECO:0007669"/>
    <property type="project" value="UniProtKB-KW"/>
</dbReference>
<dbReference type="GO" id="GO:0005524">
    <property type="term" value="F:ATP binding"/>
    <property type="evidence" value="ECO:0007669"/>
    <property type="project" value="UniProtKB-UniRule"/>
</dbReference>
<dbReference type="GO" id="GO:0046933">
    <property type="term" value="F:proton-transporting ATP synthase activity, rotational mechanism"/>
    <property type="evidence" value="ECO:0007669"/>
    <property type="project" value="UniProtKB-UniRule"/>
</dbReference>
<dbReference type="CDD" id="cd12151">
    <property type="entry name" value="F1-ATPase_gamma"/>
    <property type="match status" value="1"/>
</dbReference>
<dbReference type="FunFam" id="3.40.1380.10:FF:000006">
    <property type="entry name" value="ATP synthase gamma chain"/>
    <property type="match status" value="1"/>
</dbReference>
<dbReference type="FunFam" id="1.10.287.80:FF:000003">
    <property type="entry name" value="ATP synthase gamma chain, chloroplastic"/>
    <property type="match status" value="1"/>
</dbReference>
<dbReference type="Gene3D" id="3.40.1380.10">
    <property type="match status" value="1"/>
</dbReference>
<dbReference type="Gene3D" id="1.10.287.80">
    <property type="entry name" value="ATP synthase, gamma subunit, helix hairpin domain"/>
    <property type="match status" value="2"/>
</dbReference>
<dbReference type="HAMAP" id="MF_00815">
    <property type="entry name" value="ATP_synth_gamma_bact"/>
    <property type="match status" value="1"/>
</dbReference>
<dbReference type="InterPro" id="IPR035968">
    <property type="entry name" value="ATP_synth_F1_ATPase_gsu"/>
</dbReference>
<dbReference type="InterPro" id="IPR000131">
    <property type="entry name" value="ATP_synth_F1_gsu"/>
</dbReference>
<dbReference type="NCBIfam" id="TIGR01146">
    <property type="entry name" value="ATPsyn_F1gamma"/>
    <property type="match status" value="1"/>
</dbReference>
<dbReference type="NCBIfam" id="NF004145">
    <property type="entry name" value="PRK05621.1-2"/>
    <property type="match status" value="1"/>
</dbReference>
<dbReference type="PANTHER" id="PTHR11693">
    <property type="entry name" value="ATP SYNTHASE GAMMA CHAIN"/>
    <property type="match status" value="1"/>
</dbReference>
<dbReference type="PANTHER" id="PTHR11693:SF41">
    <property type="entry name" value="ATP SYNTHASE GAMMA CHAIN, CHLOROPLASTIC"/>
    <property type="match status" value="1"/>
</dbReference>
<dbReference type="Pfam" id="PF00231">
    <property type="entry name" value="ATP-synt"/>
    <property type="match status" value="1"/>
</dbReference>
<dbReference type="PRINTS" id="PR00126">
    <property type="entry name" value="ATPASEGAMMA"/>
</dbReference>
<dbReference type="SUPFAM" id="SSF52943">
    <property type="entry name" value="ATP synthase (F1-ATPase), gamma subunit"/>
    <property type="match status" value="1"/>
</dbReference>
<proteinExistence type="inferred from homology"/>
<keyword id="KW-0066">ATP synthesis</keyword>
<keyword id="KW-0139">CF(1)</keyword>
<keyword id="KW-0375">Hydrogen ion transport</keyword>
<keyword id="KW-0406">Ion transport</keyword>
<keyword id="KW-0472">Membrane</keyword>
<keyword id="KW-0793">Thylakoid</keyword>
<keyword id="KW-0813">Transport</keyword>
<name>ATPG_PROM2</name>
<organism>
    <name type="scientific">Prochlorococcus marinus (strain MIT 9215)</name>
    <dbReference type="NCBI Taxonomy" id="93060"/>
    <lineage>
        <taxon>Bacteria</taxon>
        <taxon>Bacillati</taxon>
        <taxon>Cyanobacteriota</taxon>
        <taxon>Cyanophyceae</taxon>
        <taxon>Synechococcales</taxon>
        <taxon>Prochlorococcaceae</taxon>
        <taxon>Prochlorococcus</taxon>
    </lineage>
</organism>
<reference key="1">
    <citation type="journal article" date="2007" name="PLoS Genet.">
        <title>Patterns and implications of gene gain and loss in the evolution of Prochlorococcus.</title>
        <authorList>
            <person name="Kettler G.C."/>
            <person name="Martiny A.C."/>
            <person name="Huang K."/>
            <person name="Zucker J."/>
            <person name="Coleman M.L."/>
            <person name="Rodrigue S."/>
            <person name="Chen F."/>
            <person name="Lapidus A."/>
            <person name="Ferriera S."/>
            <person name="Johnson J."/>
            <person name="Steglich C."/>
            <person name="Church G.M."/>
            <person name="Richardson P."/>
            <person name="Chisholm S.W."/>
        </authorList>
    </citation>
    <scope>NUCLEOTIDE SEQUENCE [LARGE SCALE GENOMIC DNA]</scope>
    <source>
        <strain>MIT 9215</strain>
    </source>
</reference>
<accession>A8G6V0</accession>
<sequence length="316" mass="35345">MANLKEIRDRIVSVKNTRKITEAMRLVAAAKVRRAQDQVLKSRPFADKLARVLENIQSRVQFEAVDSPLLSKREVKSISLVCITADRGLCGGYNTNIIKKVEIRYAELVKQGFQPNLILVGKKAIGFFQNRKDRYVIKSTFKELEQVPTVKDSEGITNEILAEFLSENSDRVEIIYTKFITLVSCAPVVQTLLPLDPQGIAEENDEIFRLTTKDSKLLVEKSNIEKSDSEKLPSDIVFEQSPDQLLDSLLPLYLQNQVLRALQESAASELACRMTAMNNASDNAKELASTLNLTYNKARQAAITQEILEVVGGSVV</sequence>